<keyword id="KW-0175">Coiled coil</keyword>
<keyword id="KW-0472">Membrane</keyword>
<keyword id="KW-0496">Mitochondrion</keyword>
<keyword id="KW-1185">Reference proteome</keyword>
<keyword id="KW-0812">Transmembrane</keyword>
<keyword id="KW-1133">Transmembrane helix</keyword>
<protein>
    <recommendedName>
        <fullName>Uncharacterized mitochondrial protein AtMg00140</fullName>
    </recommendedName>
    <alternativeName>
        <fullName>ORF167</fullName>
    </alternativeName>
</protein>
<geneLocation type="mitochondrion"/>
<reference key="1">
    <citation type="journal article" date="1997" name="Nat. Genet.">
        <title>The mitochondrial genome of Arabidopsis thaliana contains 57 genes in 366,924 nucleotides.</title>
        <authorList>
            <person name="Unseld M."/>
            <person name="Marienfeld J.R."/>
            <person name="Brandt P."/>
            <person name="Brennicke A."/>
        </authorList>
    </citation>
    <scope>NUCLEOTIDE SEQUENCE [LARGE SCALE GENOMIC DNA]</scope>
    <source>
        <strain>cv. C24</strain>
    </source>
</reference>
<reference key="2">
    <citation type="journal article" date="2018" name="Plant Cell">
        <title>Correction of persistent errors in Arabidopsis reference mitochondrial genomes.</title>
        <authorList>
            <person name="Sloan D.B."/>
            <person name="Wu Z."/>
            <person name="Sharbrough J."/>
        </authorList>
    </citation>
    <scope>NUCLEOTIDE SEQUENCE [LARGE SCALE GENOMIC DNA]</scope>
    <source>
        <strain>cv. Columbia</strain>
    </source>
</reference>
<feature type="chain" id="PRO_0000196757" description="Uncharacterized mitochondrial protein AtMg00140">
    <location>
        <begin position="1"/>
        <end position="167"/>
    </location>
</feature>
<feature type="transmembrane region" description="Helical" evidence="1">
    <location>
        <begin position="39"/>
        <end position="59"/>
    </location>
</feature>
<feature type="region of interest" description="Disordered" evidence="2">
    <location>
        <begin position="134"/>
        <end position="167"/>
    </location>
</feature>
<feature type="coiled-coil region" evidence="1">
    <location>
        <begin position="92"/>
        <end position="122"/>
    </location>
</feature>
<feature type="compositionally biased region" description="Basic and acidic residues" evidence="2">
    <location>
        <begin position="154"/>
        <end position="167"/>
    </location>
</feature>
<proteinExistence type="predicted"/>
<comment type="subcellular location">
    <subcellularLocation>
        <location evidence="3">Mitochondrion membrane</location>
        <topology evidence="3">Single-pass membrane protein</topology>
    </subcellularLocation>
</comment>
<sequence length="167" mass="19071">MNQLDQYSQPMQHLILLWFWLLDLSPPPSFHLSVKSVDLSLFSLSPLFLLLSISSLIFSRVNKFGIRRVGYAMAPKPDPTVLPDLQEKKAILGTQIEMITQAMTTLESRVTDLQQESNDHRTWVREALDKLLKRDLGDENRPKPTTNKMIATGEQHKGEVSTSLFHD</sequence>
<evidence type="ECO:0000255" key="1"/>
<evidence type="ECO:0000256" key="2">
    <source>
        <dbReference type="SAM" id="MobiDB-lite"/>
    </source>
</evidence>
<evidence type="ECO:0000305" key="3"/>
<name>M140_ARATH</name>
<accession>P93283</accession>
<gene>
    <name type="ordered locus">AtMg00140</name>
</gene>
<organism>
    <name type="scientific">Arabidopsis thaliana</name>
    <name type="common">Mouse-ear cress</name>
    <dbReference type="NCBI Taxonomy" id="3702"/>
    <lineage>
        <taxon>Eukaryota</taxon>
        <taxon>Viridiplantae</taxon>
        <taxon>Streptophyta</taxon>
        <taxon>Embryophyta</taxon>
        <taxon>Tracheophyta</taxon>
        <taxon>Spermatophyta</taxon>
        <taxon>Magnoliopsida</taxon>
        <taxon>eudicotyledons</taxon>
        <taxon>Gunneridae</taxon>
        <taxon>Pentapetalae</taxon>
        <taxon>rosids</taxon>
        <taxon>malvids</taxon>
        <taxon>Brassicales</taxon>
        <taxon>Brassicaceae</taxon>
        <taxon>Camelineae</taxon>
        <taxon>Arabidopsis</taxon>
    </lineage>
</organism>
<dbReference type="EMBL" id="Y08501">
    <property type="protein sequence ID" value="CAA69759.1"/>
    <property type="molecule type" value="Genomic_DNA"/>
</dbReference>
<dbReference type="EMBL" id="BK010421">
    <property type="status" value="NOT_ANNOTATED_CDS"/>
    <property type="molecule type" value="Genomic_DNA"/>
</dbReference>
<dbReference type="RefSeq" id="NP_085485.1">
    <property type="nucleotide sequence ID" value="NC_001284.2"/>
</dbReference>
<dbReference type="SMR" id="P93283"/>
<dbReference type="MetOSite" id="P93283"/>
<dbReference type="PaxDb" id="3702-ATMG00140.1"/>
<dbReference type="EnsemblPlants" id="ATMG00140.1">
    <property type="protein sequence ID" value="ATMG00140.1"/>
    <property type="gene ID" value="ATMG00140"/>
</dbReference>
<dbReference type="Gramene" id="ATMG00140.1">
    <property type="protein sequence ID" value="ATMG00140.1"/>
    <property type="gene ID" value="ATMG00140"/>
</dbReference>
<dbReference type="Araport" id="ATMG00140"/>
<dbReference type="TAIR" id="ATMG00140">
    <property type="gene designation" value="ORF167"/>
</dbReference>
<dbReference type="HOGENOM" id="CLU_1596764_0_0_1"/>
<dbReference type="InParanoid" id="P93283"/>
<dbReference type="PRO" id="PR:P93283"/>
<dbReference type="Proteomes" id="UP000006548">
    <property type="component" value="Mitochondrion MT"/>
</dbReference>
<dbReference type="ExpressionAtlas" id="P93283">
    <property type="expression patterns" value="baseline and differential"/>
</dbReference>
<dbReference type="GO" id="GO:0031966">
    <property type="term" value="C:mitochondrial membrane"/>
    <property type="evidence" value="ECO:0007669"/>
    <property type="project" value="UniProtKB-SubCell"/>
</dbReference>